<reference key="1">
    <citation type="journal article" date="2007" name="BMC Microbiol.">
        <title>Subtle genetic changes enhance virulence of methicillin resistant and sensitive Staphylococcus aureus.</title>
        <authorList>
            <person name="Highlander S.K."/>
            <person name="Hulten K.G."/>
            <person name="Qin X."/>
            <person name="Jiang H."/>
            <person name="Yerrapragada S."/>
            <person name="Mason E.O. Jr."/>
            <person name="Shang Y."/>
            <person name="Williams T.M."/>
            <person name="Fortunov R.M."/>
            <person name="Liu Y."/>
            <person name="Igboeli O."/>
            <person name="Petrosino J."/>
            <person name="Tirumalai M."/>
            <person name="Uzman A."/>
            <person name="Fox G.E."/>
            <person name="Cardenas A.M."/>
            <person name="Muzny D.M."/>
            <person name="Hemphill L."/>
            <person name="Ding Y."/>
            <person name="Dugan S."/>
            <person name="Blyth P.R."/>
            <person name="Buhay C.J."/>
            <person name="Dinh H.H."/>
            <person name="Hawes A.C."/>
            <person name="Holder M."/>
            <person name="Kovar C.L."/>
            <person name="Lee S.L."/>
            <person name="Liu W."/>
            <person name="Nazareth L.V."/>
            <person name="Wang Q."/>
            <person name="Zhou J."/>
            <person name="Kaplan S.L."/>
            <person name="Weinstock G.M."/>
        </authorList>
    </citation>
    <scope>NUCLEOTIDE SEQUENCE [LARGE SCALE GENOMIC DNA]</scope>
    <source>
        <strain>USA300 / TCH1516</strain>
    </source>
</reference>
<feature type="chain" id="PRO_0000333171" description="Membrane-associated protein TcaA">
    <location>
        <begin position="1"/>
        <end position="460"/>
    </location>
</feature>
<feature type="topological domain" description="Cytoplasmic" evidence="2">
    <location>
        <begin position="1"/>
        <end position="49"/>
    </location>
</feature>
<feature type="transmembrane region" description="Helical" evidence="2">
    <location>
        <begin position="50"/>
        <end position="70"/>
    </location>
</feature>
<feature type="topological domain" description="Extracellular" evidence="2">
    <location>
        <begin position="71"/>
        <end position="460"/>
    </location>
</feature>
<feature type="zinc finger region" description="C4-type" evidence="2">
    <location>
        <begin position="4"/>
        <end position="21"/>
    </location>
</feature>
<gene>
    <name type="primary">tcaA</name>
    <name type="ordered locus">USA300HOU_2338</name>
</gene>
<organism>
    <name type="scientific">Staphylococcus aureus (strain USA300 / TCH1516)</name>
    <dbReference type="NCBI Taxonomy" id="451516"/>
    <lineage>
        <taxon>Bacteria</taxon>
        <taxon>Bacillati</taxon>
        <taxon>Bacillota</taxon>
        <taxon>Bacilli</taxon>
        <taxon>Bacillales</taxon>
        <taxon>Staphylococcaceae</taxon>
        <taxon>Staphylococcus</taxon>
    </lineage>
</organism>
<evidence type="ECO:0000250" key="1"/>
<evidence type="ECO:0000255" key="2"/>
<evidence type="ECO:0000305" key="3"/>
<sequence length="460" mass="52114">MKSCPKCGQQAQDDVQICTQCGHKFDSRQALYRKSTDEDIQTNNIKMRKMVPWAIGFFILILIIILFFLLRNFNSPEAQTKILVNAIENNDKQKVATLLSTKDNKVDSEEAKVYINYIKDEVGLKQFVSDLKNTVHKLNKSKTSVASYIQTRSGQNILRVSKNGTRYIFFDNMSFTAPTKQPIVKPKEKTKYEFKSGGKKKMVIAEANKVTPIGNFIPGTYRIPAMKSTENGDFAGHLKFDFRQSNSETVDVTEDFEEANISVTLKGDTKLNDSSKKVTINDHEMAFSSSKTYGPYPQNKDITISASGKAKDKTFTTQTKTIKASDLKYNTEITLNFDSEDIEDYVEKKEKEENSLKNKLIEFFAGYSLANNAAFNQSDFDFVSSYIKKGSSFYDDVKKRVSKGSLMMISSPQIIDAEKHGDKITATVRLINENGKQVDKEYELEQGSQDRLQLIKTSEK</sequence>
<protein>
    <recommendedName>
        <fullName>Membrane-associated protein TcaA</fullName>
    </recommendedName>
</protein>
<name>TCAA_STAAT</name>
<comment type="function">
    <text evidence="1">Plays a major role in decreasing resistance to glycopeptide antibiotics.</text>
</comment>
<comment type="subcellular location">
    <subcellularLocation>
        <location evidence="1">Cell membrane</location>
        <topology evidence="1">Single-pass membrane protein</topology>
    </subcellularLocation>
</comment>
<comment type="similarity">
    <text evidence="3">Belongs to the TcaA family.</text>
</comment>
<keyword id="KW-0046">Antibiotic resistance</keyword>
<keyword id="KW-1003">Cell membrane</keyword>
<keyword id="KW-0472">Membrane</keyword>
<keyword id="KW-0479">Metal-binding</keyword>
<keyword id="KW-0812">Transmembrane</keyword>
<keyword id="KW-1133">Transmembrane helix</keyword>
<keyword id="KW-0862">Zinc</keyword>
<keyword id="KW-0863">Zinc-finger</keyword>
<accession>A8Z547</accession>
<dbReference type="EMBL" id="CP000730">
    <property type="protein sequence ID" value="ABX30330.1"/>
    <property type="molecule type" value="Genomic_DNA"/>
</dbReference>
<dbReference type="RefSeq" id="WP_000833797.1">
    <property type="nucleotide sequence ID" value="NC_010079.1"/>
</dbReference>
<dbReference type="KEGG" id="sax:USA300HOU_2338"/>
<dbReference type="HOGENOM" id="CLU_047245_0_0_9"/>
<dbReference type="GO" id="GO:0005886">
    <property type="term" value="C:plasma membrane"/>
    <property type="evidence" value="ECO:0007669"/>
    <property type="project" value="UniProtKB-SubCell"/>
</dbReference>
<dbReference type="GO" id="GO:0008270">
    <property type="term" value="F:zinc ion binding"/>
    <property type="evidence" value="ECO:0007669"/>
    <property type="project" value="UniProtKB-KW"/>
</dbReference>
<dbReference type="GO" id="GO:0046677">
    <property type="term" value="P:response to antibiotic"/>
    <property type="evidence" value="ECO:0007669"/>
    <property type="project" value="UniProtKB-KW"/>
</dbReference>
<dbReference type="InterPro" id="IPR023599">
    <property type="entry name" value="Mem_prot_TcaA"/>
</dbReference>
<dbReference type="InterPro" id="IPR054529">
    <property type="entry name" value="TcaA_2nd"/>
</dbReference>
<dbReference type="InterPro" id="IPR054530">
    <property type="entry name" value="TcaA_4th"/>
</dbReference>
<dbReference type="PANTHER" id="PTHR40038">
    <property type="entry name" value="MEMBRANE-ASSOCIATED PROTEIN TCAA"/>
    <property type="match status" value="1"/>
</dbReference>
<dbReference type="PANTHER" id="PTHR40038:SF1">
    <property type="entry name" value="MEMBRANE-ASSOCIATED PROTEIN TCAA"/>
    <property type="match status" value="1"/>
</dbReference>
<dbReference type="Pfam" id="PF22813">
    <property type="entry name" value="TcaA_2nd"/>
    <property type="match status" value="1"/>
</dbReference>
<dbReference type="Pfam" id="PF22820">
    <property type="entry name" value="TcaA_3rd_4th"/>
    <property type="match status" value="1"/>
</dbReference>
<dbReference type="Pfam" id="PF22819">
    <property type="entry name" value="TcaA_5th"/>
    <property type="match status" value="1"/>
</dbReference>
<dbReference type="PIRSF" id="PIRSF032522">
    <property type="entry name" value="TcaA"/>
    <property type="match status" value="1"/>
</dbReference>
<proteinExistence type="inferred from homology"/>